<dbReference type="EC" id="2.7.7.56" evidence="1"/>
<dbReference type="EMBL" id="AE014075">
    <property type="protein sequence ID" value="AAN82903.1"/>
    <property type="status" value="ALT_INIT"/>
    <property type="molecule type" value="Genomic_DNA"/>
</dbReference>
<dbReference type="RefSeq" id="WP_001247093.1">
    <property type="nucleotide sequence ID" value="NZ_CP051263.1"/>
</dbReference>
<dbReference type="SMR" id="P66679"/>
<dbReference type="STRING" id="199310.c4467"/>
<dbReference type="GeneID" id="93778358"/>
<dbReference type="KEGG" id="ecc:c4467"/>
<dbReference type="eggNOG" id="COG0689">
    <property type="taxonomic scope" value="Bacteria"/>
</dbReference>
<dbReference type="HOGENOM" id="CLU_050858_0_0_6"/>
<dbReference type="Proteomes" id="UP000001410">
    <property type="component" value="Chromosome"/>
</dbReference>
<dbReference type="GO" id="GO:0000175">
    <property type="term" value="F:3'-5'-RNA exonuclease activity"/>
    <property type="evidence" value="ECO:0007669"/>
    <property type="project" value="UniProtKB-UniRule"/>
</dbReference>
<dbReference type="GO" id="GO:0000049">
    <property type="term" value="F:tRNA binding"/>
    <property type="evidence" value="ECO:0007669"/>
    <property type="project" value="UniProtKB-UniRule"/>
</dbReference>
<dbReference type="GO" id="GO:0009022">
    <property type="term" value="F:tRNA nucleotidyltransferase activity"/>
    <property type="evidence" value="ECO:0007669"/>
    <property type="project" value="UniProtKB-UniRule"/>
</dbReference>
<dbReference type="GO" id="GO:0016075">
    <property type="term" value="P:rRNA catabolic process"/>
    <property type="evidence" value="ECO:0007669"/>
    <property type="project" value="UniProtKB-UniRule"/>
</dbReference>
<dbReference type="GO" id="GO:0006364">
    <property type="term" value="P:rRNA processing"/>
    <property type="evidence" value="ECO:0007669"/>
    <property type="project" value="UniProtKB-KW"/>
</dbReference>
<dbReference type="GO" id="GO:0008033">
    <property type="term" value="P:tRNA processing"/>
    <property type="evidence" value="ECO:0007669"/>
    <property type="project" value="UniProtKB-UniRule"/>
</dbReference>
<dbReference type="CDD" id="cd11362">
    <property type="entry name" value="RNase_PH_bact"/>
    <property type="match status" value="1"/>
</dbReference>
<dbReference type="FunFam" id="3.30.230.70:FF:000003">
    <property type="entry name" value="Ribonuclease PH"/>
    <property type="match status" value="1"/>
</dbReference>
<dbReference type="Gene3D" id="3.30.230.70">
    <property type="entry name" value="GHMP Kinase, N-terminal domain"/>
    <property type="match status" value="1"/>
</dbReference>
<dbReference type="HAMAP" id="MF_00564">
    <property type="entry name" value="RNase_PH"/>
    <property type="match status" value="1"/>
</dbReference>
<dbReference type="InterPro" id="IPR001247">
    <property type="entry name" value="ExoRNase_PH_dom1"/>
</dbReference>
<dbReference type="InterPro" id="IPR015847">
    <property type="entry name" value="ExoRNase_PH_dom2"/>
</dbReference>
<dbReference type="InterPro" id="IPR036345">
    <property type="entry name" value="ExoRNase_PH_dom2_sf"/>
</dbReference>
<dbReference type="InterPro" id="IPR027408">
    <property type="entry name" value="PNPase/RNase_PH_dom_sf"/>
</dbReference>
<dbReference type="InterPro" id="IPR020568">
    <property type="entry name" value="Ribosomal_Su5_D2-typ_SF"/>
</dbReference>
<dbReference type="InterPro" id="IPR050080">
    <property type="entry name" value="RNase_PH"/>
</dbReference>
<dbReference type="InterPro" id="IPR002381">
    <property type="entry name" value="RNase_PH_bac-type"/>
</dbReference>
<dbReference type="InterPro" id="IPR018336">
    <property type="entry name" value="RNase_PH_CS"/>
</dbReference>
<dbReference type="NCBIfam" id="TIGR01966">
    <property type="entry name" value="RNasePH"/>
    <property type="match status" value="1"/>
</dbReference>
<dbReference type="PANTHER" id="PTHR11953">
    <property type="entry name" value="EXOSOME COMPLEX COMPONENT"/>
    <property type="match status" value="1"/>
</dbReference>
<dbReference type="PANTHER" id="PTHR11953:SF0">
    <property type="entry name" value="EXOSOME COMPLEX COMPONENT RRP41"/>
    <property type="match status" value="1"/>
</dbReference>
<dbReference type="Pfam" id="PF01138">
    <property type="entry name" value="RNase_PH"/>
    <property type="match status" value="1"/>
</dbReference>
<dbReference type="Pfam" id="PF03725">
    <property type="entry name" value="RNase_PH_C"/>
    <property type="match status" value="1"/>
</dbReference>
<dbReference type="SUPFAM" id="SSF55666">
    <property type="entry name" value="Ribonuclease PH domain 2-like"/>
    <property type="match status" value="1"/>
</dbReference>
<dbReference type="SUPFAM" id="SSF54211">
    <property type="entry name" value="Ribosomal protein S5 domain 2-like"/>
    <property type="match status" value="1"/>
</dbReference>
<dbReference type="PROSITE" id="PS01277">
    <property type="entry name" value="RIBONUCLEASE_PH"/>
    <property type="match status" value="1"/>
</dbReference>
<keyword id="KW-0548">Nucleotidyltransferase</keyword>
<keyword id="KW-1185">Reference proteome</keyword>
<keyword id="KW-0694">RNA-binding</keyword>
<keyword id="KW-0698">rRNA processing</keyword>
<keyword id="KW-0808">Transferase</keyword>
<keyword id="KW-0819">tRNA processing</keyword>
<keyword id="KW-0820">tRNA-binding</keyword>
<reference key="1">
    <citation type="journal article" date="2002" name="Proc. Natl. Acad. Sci. U.S.A.">
        <title>Extensive mosaic structure revealed by the complete genome sequence of uropathogenic Escherichia coli.</title>
        <authorList>
            <person name="Welch R.A."/>
            <person name="Burland V."/>
            <person name="Plunkett G. III"/>
            <person name="Redford P."/>
            <person name="Roesch P."/>
            <person name="Rasko D."/>
            <person name="Buckles E.L."/>
            <person name="Liou S.-R."/>
            <person name="Boutin A."/>
            <person name="Hackett J."/>
            <person name="Stroud D."/>
            <person name="Mayhew G.F."/>
            <person name="Rose D.J."/>
            <person name="Zhou S."/>
            <person name="Schwartz D.C."/>
            <person name="Perna N.T."/>
            <person name="Mobley H.L.T."/>
            <person name="Donnenberg M.S."/>
            <person name="Blattner F.R."/>
        </authorList>
    </citation>
    <scope>NUCLEOTIDE SEQUENCE [LARGE SCALE GENOMIC DNA]</scope>
    <source>
        <strain>CFT073 / ATCC 700928 / UPEC</strain>
    </source>
</reference>
<accession>P66679</accession>
<accession>Q8XD98</accession>
<comment type="function">
    <text evidence="1">Phosphorolytic 3'-5' exoribonuclease that plays an important role in tRNA 3'-end maturation. Removes nucleotide residues following the 3'-CCA terminus of tRNAs; can also add nucleotides to the ends of RNA molecules by using nucleoside diphosphates as substrates, but this may not be physiologically important. Probably plays a role in initiation of 16S rRNA degradation (leading to ribosome degradation) during starvation.</text>
</comment>
<comment type="catalytic activity">
    <reaction evidence="1">
        <text>tRNA(n+1) + phosphate = tRNA(n) + a ribonucleoside 5'-diphosphate</text>
        <dbReference type="Rhea" id="RHEA:10628"/>
        <dbReference type="Rhea" id="RHEA-COMP:17343"/>
        <dbReference type="Rhea" id="RHEA-COMP:17344"/>
        <dbReference type="ChEBI" id="CHEBI:43474"/>
        <dbReference type="ChEBI" id="CHEBI:57930"/>
        <dbReference type="ChEBI" id="CHEBI:173114"/>
        <dbReference type="EC" id="2.7.7.56"/>
    </reaction>
</comment>
<comment type="subunit">
    <text evidence="1">Homohexameric ring arranged as a trimer of dimers.</text>
</comment>
<comment type="similarity">
    <text evidence="1">Belongs to the RNase PH family.</text>
</comment>
<comment type="sequence caution" evidence="2">
    <conflict type="erroneous initiation">
        <sequence resource="EMBL-CDS" id="AAN82903"/>
    </conflict>
    <text>Extended N-terminus.</text>
</comment>
<name>RNPH_ECOL6</name>
<organism>
    <name type="scientific">Escherichia coli O6:H1 (strain CFT073 / ATCC 700928 / UPEC)</name>
    <dbReference type="NCBI Taxonomy" id="199310"/>
    <lineage>
        <taxon>Bacteria</taxon>
        <taxon>Pseudomonadati</taxon>
        <taxon>Pseudomonadota</taxon>
        <taxon>Gammaproteobacteria</taxon>
        <taxon>Enterobacterales</taxon>
        <taxon>Enterobacteriaceae</taxon>
        <taxon>Escherichia</taxon>
    </lineage>
</organism>
<proteinExistence type="inferred from homology"/>
<protein>
    <recommendedName>
        <fullName evidence="1">Ribonuclease PH</fullName>
        <shortName evidence="1">RNase PH</shortName>
        <ecNumber evidence="1">2.7.7.56</ecNumber>
    </recommendedName>
    <alternativeName>
        <fullName evidence="1">tRNA nucleotidyltransferase</fullName>
    </alternativeName>
</protein>
<evidence type="ECO:0000255" key="1">
    <source>
        <dbReference type="HAMAP-Rule" id="MF_00564"/>
    </source>
</evidence>
<evidence type="ECO:0000305" key="2"/>
<gene>
    <name evidence="1" type="primary">rph</name>
    <name type="ordered locus">c4467</name>
</gene>
<feature type="chain" id="PRO_0000139890" description="Ribonuclease PH">
    <location>
        <begin position="1"/>
        <end position="238"/>
    </location>
</feature>
<feature type="binding site" evidence="1">
    <location>
        <position position="86"/>
    </location>
    <ligand>
        <name>phosphate</name>
        <dbReference type="ChEBI" id="CHEBI:43474"/>
        <note>substrate</note>
    </ligand>
</feature>
<feature type="binding site" evidence="1">
    <location>
        <begin position="124"/>
        <end position="126"/>
    </location>
    <ligand>
        <name>phosphate</name>
        <dbReference type="ChEBI" id="CHEBI:43474"/>
        <note>substrate</note>
    </ligand>
</feature>
<sequence length="238" mass="25312">MRPAGRSNNQVRPVTLTRNYTKHAEGSVLVEFGDTKVLCTASIEEGVPRFLKGQGQGWITAEYGMLPRSTHTRNAREAAKGKQGGRTMEIQRLIARALRAAVDLKALGEFTITLDCDVLQADGGTRTASITGACVALADALQKLVENGKLKTNPMKGMVAAVSVGIVNGEAVCDLEYVEDSAAETDMNVVMTEDGRIIEVQGTAEGEPFTHEELLTLLALARGGIESIVATQKAALAN</sequence>